<comment type="function">
    <text evidence="1">Together with its co-chaperonin GroES, plays an essential role in assisting protein folding. The GroEL-GroES system forms a nano-cage that allows encapsulation of the non-native substrate proteins and provides a physical environment optimized to promote and accelerate protein folding.</text>
</comment>
<comment type="catalytic activity">
    <reaction evidence="1">
        <text>ATP + H2O + a folded polypeptide = ADP + phosphate + an unfolded polypeptide.</text>
        <dbReference type="EC" id="5.6.1.7"/>
    </reaction>
</comment>
<comment type="subunit">
    <text evidence="1">Forms a cylinder of 14 subunits composed of two heptameric rings stacked back-to-back. Interacts with the co-chaperonin GroES.</text>
</comment>
<comment type="subcellular location">
    <subcellularLocation>
        <location evidence="1">Cytoplasm</location>
    </subcellularLocation>
</comment>
<comment type="similarity">
    <text evidence="1">Belongs to the chaperonin (HSP60) family.</text>
</comment>
<gene>
    <name evidence="1" type="primary">groEL</name>
    <name evidence="1" type="synonym">groL</name>
    <name type="ordered locus">Sca_1540</name>
</gene>
<accession>B9DMM2</accession>
<protein>
    <recommendedName>
        <fullName evidence="1">Chaperonin GroEL</fullName>
        <ecNumber evidence="1">5.6.1.7</ecNumber>
    </recommendedName>
    <alternativeName>
        <fullName evidence="1">60 kDa chaperonin</fullName>
    </alternativeName>
    <alternativeName>
        <fullName evidence="1">Chaperonin-60</fullName>
        <shortName evidence="1">Cpn60</shortName>
    </alternativeName>
</protein>
<name>CH60_STACT</name>
<keyword id="KW-0067">ATP-binding</keyword>
<keyword id="KW-0143">Chaperone</keyword>
<keyword id="KW-0963">Cytoplasm</keyword>
<keyword id="KW-0413">Isomerase</keyword>
<keyword id="KW-0547">Nucleotide-binding</keyword>
<keyword id="KW-1185">Reference proteome</keyword>
<feature type="chain" id="PRO_1000147042" description="Chaperonin GroEL">
    <location>
        <begin position="1"/>
        <end position="540"/>
    </location>
</feature>
<feature type="binding site" evidence="1">
    <location>
        <begin position="29"/>
        <end position="32"/>
    </location>
    <ligand>
        <name>ATP</name>
        <dbReference type="ChEBI" id="CHEBI:30616"/>
    </ligand>
</feature>
<feature type="binding site" evidence="1">
    <location>
        <begin position="86"/>
        <end position="90"/>
    </location>
    <ligand>
        <name>ATP</name>
        <dbReference type="ChEBI" id="CHEBI:30616"/>
    </ligand>
</feature>
<feature type="binding site" evidence="1">
    <location>
        <position position="413"/>
    </location>
    <ligand>
        <name>ATP</name>
        <dbReference type="ChEBI" id="CHEBI:30616"/>
    </ligand>
</feature>
<feature type="binding site" evidence="1">
    <location>
        <begin position="476"/>
        <end position="478"/>
    </location>
    <ligand>
        <name>ATP</name>
        <dbReference type="ChEBI" id="CHEBI:30616"/>
    </ligand>
</feature>
<feature type="binding site" evidence="1">
    <location>
        <position position="492"/>
    </location>
    <ligand>
        <name>ATP</name>
        <dbReference type="ChEBI" id="CHEBI:30616"/>
    </ligand>
</feature>
<evidence type="ECO:0000255" key="1">
    <source>
        <dbReference type="HAMAP-Rule" id="MF_00600"/>
    </source>
</evidence>
<organism>
    <name type="scientific">Staphylococcus carnosus (strain TM300)</name>
    <dbReference type="NCBI Taxonomy" id="396513"/>
    <lineage>
        <taxon>Bacteria</taxon>
        <taxon>Bacillati</taxon>
        <taxon>Bacillota</taxon>
        <taxon>Bacilli</taxon>
        <taxon>Bacillales</taxon>
        <taxon>Staphylococcaceae</taxon>
        <taxon>Staphylococcus</taxon>
    </lineage>
</organism>
<reference key="1">
    <citation type="journal article" date="2009" name="Appl. Environ. Microbiol.">
        <title>Genome analysis of the meat starter culture bacterium Staphylococcus carnosus TM300.</title>
        <authorList>
            <person name="Rosenstein R."/>
            <person name="Nerz C."/>
            <person name="Biswas L."/>
            <person name="Resch A."/>
            <person name="Raddatz G."/>
            <person name="Schuster S.C."/>
            <person name="Goetz F."/>
        </authorList>
    </citation>
    <scope>NUCLEOTIDE SEQUENCE [LARGE SCALE GENOMIC DNA]</scope>
    <source>
        <strain>TM300</strain>
    </source>
</reference>
<proteinExistence type="inferred from homology"/>
<dbReference type="EC" id="5.6.1.7" evidence="1"/>
<dbReference type="EMBL" id="AM295250">
    <property type="protein sequence ID" value="CAL28445.1"/>
    <property type="molecule type" value="Genomic_DNA"/>
</dbReference>
<dbReference type="RefSeq" id="WP_015900785.1">
    <property type="nucleotide sequence ID" value="NC_012121.1"/>
</dbReference>
<dbReference type="SMR" id="B9DMM2"/>
<dbReference type="GeneID" id="93793991"/>
<dbReference type="KEGG" id="sca:SCA_1540"/>
<dbReference type="eggNOG" id="COG0459">
    <property type="taxonomic scope" value="Bacteria"/>
</dbReference>
<dbReference type="HOGENOM" id="CLU_016503_3_0_9"/>
<dbReference type="OrthoDB" id="9766614at2"/>
<dbReference type="BioCyc" id="SCAR396513:SCA_RS07805-MONOMER"/>
<dbReference type="Proteomes" id="UP000000444">
    <property type="component" value="Chromosome"/>
</dbReference>
<dbReference type="GO" id="GO:0005737">
    <property type="term" value="C:cytoplasm"/>
    <property type="evidence" value="ECO:0007669"/>
    <property type="project" value="UniProtKB-SubCell"/>
</dbReference>
<dbReference type="GO" id="GO:0005524">
    <property type="term" value="F:ATP binding"/>
    <property type="evidence" value="ECO:0007669"/>
    <property type="project" value="UniProtKB-UniRule"/>
</dbReference>
<dbReference type="GO" id="GO:0140662">
    <property type="term" value="F:ATP-dependent protein folding chaperone"/>
    <property type="evidence" value="ECO:0007669"/>
    <property type="project" value="InterPro"/>
</dbReference>
<dbReference type="GO" id="GO:0016853">
    <property type="term" value="F:isomerase activity"/>
    <property type="evidence" value="ECO:0007669"/>
    <property type="project" value="UniProtKB-KW"/>
</dbReference>
<dbReference type="GO" id="GO:0051082">
    <property type="term" value="F:unfolded protein binding"/>
    <property type="evidence" value="ECO:0007669"/>
    <property type="project" value="UniProtKB-UniRule"/>
</dbReference>
<dbReference type="GO" id="GO:0042026">
    <property type="term" value="P:protein refolding"/>
    <property type="evidence" value="ECO:0007669"/>
    <property type="project" value="UniProtKB-UniRule"/>
</dbReference>
<dbReference type="CDD" id="cd03344">
    <property type="entry name" value="GroEL"/>
    <property type="match status" value="1"/>
</dbReference>
<dbReference type="FunFam" id="1.10.560.10:FF:000001">
    <property type="entry name" value="60 kDa chaperonin"/>
    <property type="match status" value="1"/>
</dbReference>
<dbReference type="FunFam" id="3.50.7.10:FF:000001">
    <property type="entry name" value="60 kDa chaperonin"/>
    <property type="match status" value="1"/>
</dbReference>
<dbReference type="Gene3D" id="3.50.7.10">
    <property type="entry name" value="GroEL"/>
    <property type="match status" value="1"/>
</dbReference>
<dbReference type="Gene3D" id="1.10.560.10">
    <property type="entry name" value="GroEL-like equatorial domain"/>
    <property type="match status" value="1"/>
</dbReference>
<dbReference type="Gene3D" id="3.30.260.10">
    <property type="entry name" value="TCP-1-like chaperonin intermediate domain"/>
    <property type="match status" value="1"/>
</dbReference>
<dbReference type="HAMAP" id="MF_00600">
    <property type="entry name" value="CH60"/>
    <property type="match status" value="1"/>
</dbReference>
<dbReference type="InterPro" id="IPR001844">
    <property type="entry name" value="Cpn60/GroEL"/>
</dbReference>
<dbReference type="InterPro" id="IPR002423">
    <property type="entry name" value="Cpn60/GroEL/TCP-1"/>
</dbReference>
<dbReference type="InterPro" id="IPR027409">
    <property type="entry name" value="GroEL-like_apical_dom_sf"/>
</dbReference>
<dbReference type="InterPro" id="IPR027413">
    <property type="entry name" value="GROEL-like_equatorial_sf"/>
</dbReference>
<dbReference type="InterPro" id="IPR027410">
    <property type="entry name" value="TCP-1-like_intermed_sf"/>
</dbReference>
<dbReference type="NCBIfam" id="TIGR02348">
    <property type="entry name" value="GroEL"/>
    <property type="match status" value="1"/>
</dbReference>
<dbReference type="NCBIfam" id="NF000592">
    <property type="entry name" value="PRK00013.1"/>
    <property type="match status" value="1"/>
</dbReference>
<dbReference type="NCBIfam" id="NF009487">
    <property type="entry name" value="PRK12849.1"/>
    <property type="match status" value="1"/>
</dbReference>
<dbReference type="NCBIfam" id="NF009488">
    <property type="entry name" value="PRK12850.1"/>
    <property type="match status" value="1"/>
</dbReference>
<dbReference type="NCBIfam" id="NF009489">
    <property type="entry name" value="PRK12851.1"/>
    <property type="match status" value="1"/>
</dbReference>
<dbReference type="PANTHER" id="PTHR45633">
    <property type="entry name" value="60 KDA HEAT SHOCK PROTEIN, MITOCHONDRIAL"/>
    <property type="match status" value="1"/>
</dbReference>
<dbReference type="Pfam" id="PF00118">
    <property type="entry name" value="Cpn60_TCP1"/>
    <property type="match status" value="1"/>
</dbReference>
<dbReference type="PRINTS" id="PR00298">
    <property type="entry name" value="CHAPERONIN60"/>
</dbReference>
<dbReference type="SUPFAM" id="SSF52029">
    <property type="entry name" value="GroEL apical domain-like"/>
    <property type="match status" value="1"/>
</dbReference>
<dbReference type="SUPFAM" id="SSF48592">
    <property type="entry name" value="GroEL equatorial domain-like"/>
    <property type="match status" value="1"/>
</dbReference>
<dbReference type="SUPFAM" id="SSF54849">
    <property type="entry name" value="GroEL-intermediate domain like"/>
    <property type="match status" value="1"/>
</dbReference>
<sequence length="540" mass="57788">MAKEIKFSEDARQSMLRGVDQLANAVKVTIGPKGRNVVLDKEYGAPLITNDGVTIAKEIELEDPYENMGAKLVQEVANKTNEIAGDGTTTATVLAQAMIQEGLKNVTSGANPVGLRKGIDKAVTEAVKSLHEQSQKVENKNEIAQVGAISAADEEIGQYISEAMDKVGNDGVISIEESNGFNTELEVVEGMQFDRGYQSPYMVTDSEKMEADLERPYILVTDKKISSFQDILPLLEQIVQSNRPILIIADEVEGDALTNIVLNRMRGTFTAVAVKAPGFGDRRKSMLEDIAILTGAQFITDDLGYDLKDATVDMLGTANKVEVTKDNTTIVNGDGDKNSIDARVTQLKSQIEETNSDFDREKLQERLAKLTGGVAVIKVGAASETELKERKLRIEDALNSTRAAVGEGIVAGGGTALVNVYKQVSEIEAEGDVETGINIVLKALEAPVRQIAENAGLEGSIIVEKLKHAEPGIGYNAATDEWVNMLDAGIVDPTKVTRSALQNAASVAAMFLTTEAVVAKLPEENNDAGGPAMGGMSGMM</sequence>